<reference key="1">
    <citation type="submission" date="2006-05" db="EMBL/GenBank/DDBJ databases">
        <authorList>
            <consortium name="Genoscope"/>
        </authorList>
    </citation>
    <scope>NUCLEOTIDE SEQUENCE [LARGE SCALE GENOMIC DNA]</scope>
    <source>
        <strain>WH7803</strain>
    </source>
</reference>
<keyword id="KW-0067">ATP-binding</keyword>
<keyword id="KW-0173">Coenzyme A biosynthesis</keyword>
<keyword id="KW-0963">Cytoplasm</keyword>
<keyword id="KW-0460">Magnesium</keyword>
<keyword id="KW-0547">Nucleotide-binding</keyword>
<keyword id="KW-0548">Nucleotidyltransferase</keyword>
<keyword id="KW-1185">Reference proteome</keyword>
<keyword id="KW-0808">Transferase</keyword>
<accession>A5GL79</accession>
<gene>
    <name evidence="1" type="primary">coaD</name>
    <name type="ordered locus">SynWH7803_1268</name>
</gene>
<proteinExistence type="inferred from homology"/>
<sequence>MKALYPGSFDPLTLGHLDLIERGASLVDELVVAVLQNPGKSPAFSLEQRLRQITASTEHLGNVSVISFDGLTVACAKEQGTRLILRGLRAMSDFEYELQIAHTNRSLAPEFETVFLTTSAHYSFLSSSVVKEVARFGGAVDHMVPRVVAEDLARFFNSAFAPPSR</sequence>
<protein>
    <recommendedName>
        <fullName evidence="1">Phosphopantetheine adenylyltransferase</fullName>
        <ecNumber evidence="1">2.7.7.3</ecNumber>
    </recommendedName>
    <alternativeName>
        <fullName evidence="1">Dephospho-CoA pyrophosphorylase</fullName>
    </alternativeName>
    <alternativeName>
        <fullName evidence="1">Pantetheine-phosphate adenylyltransferase</fullName>
        <shortName evidence="1">PPAT</shortName>
    </alternativeName>
</protein>
<name>COAD_SYNPW</name>
<organism>
    <name type="scientific">Synechococcus sp. (strain WH7803)</name>
    <dbReference type="NCBI Taxonomy" id="32051"/>
    <lineage>
        <taxon>Bacteria</taxon>
        <taxon>Bacillati</taxon>
        <taxon>Cyanobacteriota</taxon>
        <taxon>Cyanophyceae</taxon>
        <taxon>Synechococcales</taxon>
        <taxon>Synechococcaceae</taxon>
        <taxon>Synechococcus</taxon>
    </lineage>
</organism>
<evidence type="ECO:0000255" key="1">
    <source>
        <dbReference type="HAMAP-Rule" id="MF_00151"/>
    </source>
</evidence>
<dbReference type="EC" id="2.7.7.3" evidence="1"/>
<dbReference type="EMBL" id="CT971583">
    <property type="protein sequence ID" value="CAK23694.1"/>
    <property type="molecule type" value="Genomic_DNA"/>
</dbReference>
<dbReference type="SMR" id="A5GL79"/>
<dbReference type="STRING" id="32051.SynWH7803_1268"/>
<dbReference type="KEGG" id="syx:SynWH7803_1268"/>
<dbReference type="eggNOG" id="COG0669">
    <property type="taxonomic scope" value="Bacteria"/>
</dbReference>
<dbReference type="HOGENOM" id="CLU_100149_0_0_3"/>
<dbReference type="OrthoDB" id="9806661at2"/>
<dbReference type="UniPathway" id="UPA00241">
    <property type="reaction ID" value="UER00355"/>
</dbReference>
<dbReference type="Proteomes" id="UP000001566">
    <property type="component" value="Chromosome"/>
</dbReference>
<dbReference type="GO" id="GO:0005737">
    <property type="term" value="C:cytoplasm"/>
    <property type="evidence" value="ECO:0007669"/>
    <property type="project" value="UniProtKB-SubCell"/>
</dbReference>
<dbReference type="GO" id="GO:0005524">
    <property type="term" value="F:ATP binding"/>
    <property type="evidence" value="ECO:0007669"/>
    <property type="project" value="UniProtKB-KW"/>
</dbReference>
<dbReference type="GO" id="GO:0004595">
    <property type="term" value="F:pantetheine-phosphate adenylyltransferase activity"/>
    <property type="evidence" value="ECO:0007669"/>
    <property type="project" value="UniProtKB-UniRule"/>
</dbReference>
<dbReference type="GO" id="GO:0015937">
    <property type="term" value="P:coenzyme A biosynthetic process"/>
    <property type="evidence" value="ECO:0007669"/>
    <property type="project" value="UniProtKB-UniRule"/>
</dbReference>
<dbReference type="CDD" id="cd02163">
    <property type="entry name" value="PPAT"/>
    <property type="match status" value="1"/>
</dbReference>
<dbReference type="Gene3D" id="3.40.50.620">
    <property type="entry name" value="HUPs"/>
    <property type="match status" value="1"/>
</dbReference>
<dbReference type="HAMAP" id="MF_00151">
    <property type="entry name" value="PPAT_bact"/>
    <property type="match status" value="1"/>
</dbReference>
<dbReference type="InterPro" id="IPR004821">
    <property type="entry name" value="Cyt_trans-like"/>
</dbReference>
<dbReference type="InterPro" id="IPR001980">
    <property type="entry name" value="PPAT"/>
</dbReference>
<dbReference type="InterPro" id="IPR014729">
    <property type="entry name" value="Rossmann-like_a/b/a_fold"/>
</dbReference>
<dbReference type="NCBIfam" id="TIGR01510">
    <property type="entry name" value="coaD_prev_kdtB"/>
    <property type="match status" value="1"/>
</dbReference>
<dbReference type="NCBIfam" id="TIGR00125">
    <property type="entry name" value="cyt_tran_rel"/>
    <property type="match status" value="1"/>
</dbReference>
<dbReference type="PANTHER" id="PTHR21342">
    <property type="entry name" value="PHOSPHOPANTETHEINE ADENYLYLTRANSFERASE"/>
    <property type="match status" value="1"/>
</dbReference>
<dbReference type="PANTHER" id="PTHR21342:SF1">
    <property type="entry name" value="PHOSPHOPANTETHEINE ADENYLYLTRANSFERASE"/>
    <property type="match status" value="1"/>
</dbReference>
<dbReference type="Pfam" id="PF01467">
    <property type="entry name" value="CTP_transf_like"/>
    <property type="match status" value="1"/>
</dbReference>
<dbReference type="PRINTS" id="PR01020">
    <property type="entry name" value="LPSBIOSNTHSS"/>
</dbReference>
<dbReference type="SUPFAM" id="SSF52374">
    <property type="entry name" value="Nucleotidylyl transferase"/>
    <property type="match status" value="1"/>
</dbReference>
<feature type="chain" id="PRO_1000011262" description="Phosphopantetheine adenylyltransferase">
    <location>
        <begin position="1"/>
        <end position="165"/>
    </location>
</feature>
<feature type="binding site" evidence="1">
    <location>
        <begin position="8"/>
        <end position="9"/>
    </location>
    <ligand>
        <name>ATP</name>
        <dbReference type="ChEBI" id="CHEBI:30616"/>
    </ligand>
</feature>
<feature type="binding site" evidence="1">
    <location>
        <position position="8"/>
    </location>
    <ligand>
        <name>substrate</name>
    </ligand>
</feature>
<feature type="binding site" evidence="1">
    <location>
        <position position="16"/>
    </location>
    <ligand>
        <name>ATP</name>
        <dbReference type="ChEBI" id="CHEBI:30616"/>
    </ligand>
</feature>
<feature type="binding site" evidence="1">
    <location>
        <position position="40"/>
    </location>
    <ligand>
        <name>substrate</name>
    </ligand>
</feature>
<feature type="binding site" evidence="1">
    <location>
        <position position="72"/>
    </location>
    <ligand>
        <name>substrate</name>
    </ligand>
</feature>
<feature type="binding site" evidence="1">
    <location>
        <position position="86"/>
    </location>
    <ligand>
        <name>substrate</name>
    </ligand>
</feature>
<feature type="binding site" evidence="1">
    <location>
        <begin position="87"/>
        <end position="89"/>
    </location>
    <ligand>
        <name>ATP</name>
        <dbReference type="ChEBI" id="CHEBI:30616"/>
    </ligand>
</feature>
<feature type="binding site" evidence="1">
    <location>
        <position position="97"/>
    </location>
    <ligand>
        <name>ATP</name>
        <dbReference type="ChEBI" id="CHEBI:30616"/>
    </ligand>
</feature>
<feature type="binding site" evidence="1">
    <location>
        <begin position="122"/>
        <end position="128"/>
    </location>
    <ligand>
        <name>ATP</name>
        <dbReference type="ChEBI" id="CHEBI:30616"/>
    </ligand>
</feature>
<feature type="site" description="Transition state stabilizer" evidence="1">
    <location>
        <position position="16"/>
    </location>
</feature>
<comment type="function">
    <text evidence="1">Reversibly transfers an adenylyl group from ATP to 4'-phosphopantetheine, yielding dephospho-CoA (dPCoA) and pyrophosphate.</text>
</comment>
<comment type="catalytic activity">
    <reaction evidence="1">
        <text>(R)-4'-phosphopantetheine + ATP + H(+) = 3'-dephospho-CoA + diphosphate</text>
        <dbReference type="Rhea" id="RHEA:19801"/>
        <dbReference type="ChEBI" id="CHEBI:15378"/>
        <dbReference type="ChEBI" id="CHEBI:30616"/>
        <dbReference type="ChEBI" id="CHEBI:33019"/>
        <dbReference type="ChEBI" id="CHEBI:57328"/>
        <dbReference type="ChEBI" id="CHEBI:61723"/>
        <dbReference type="EC" id="2.7.7.3"/>
    </reaction>
</comment>
<comment type="cofactor">
    <cofactor evidence="1">
        <name>Mg(2+)</name>
        <dbReference type="ChEBI" id="CHEBI:18420"/>
    </cofactor>
</comment>
<comment type="pathway">
    <text evidence="1">Cofactor biosynthesis; coenzyme A biosynthesis; CoA from (R)-pantothenate: step 4/5.</text>
</comment>
<comment type="subunit">
    <text evidence="1">Homohexamer.</text>
</comment>
<comment type="subcellular location">
    <subcellularLocation>
        <location evidence="1">Cytoplasm</location>
    </subcellularLocation>
</comment>
<comment type="similarity">
    <text evidence="1">Belongs to the bacterial CoaD family.</text>
</comment>